<protein>
    <recommendedName>
        <fullName>Pheromone-binding protein Gp-9</fullName>
        <shortName>PBP</shortName>
    </recommendedName>
    <alternativeName>
        <fullName>Putative odorant-binding protein Gp-9</fullName>
    </alternativeName>
</protein>
<sequence length="153" mass="16831">MKTFVLHIFIFALVAFASASRDSAKKIGSQYDNYETCLTEHGLTDDDVFSIGEVSSGQHKTNHEDTELHKNGCVLQCMLEKDGLMSGADYDEEKMREDYIKETGAQPGDQRIEALNACMHETTDMEDKCDKSLLLVACVLAAEAVLADSNEGA</sequence>
<dbReference type="EMBL" id="AF427892">
    <property type="protein sequence ID" value="AAL51118.1"/>
    <property type="molecule type" value="Genomic_DNA"/>
</dbReference>
<dbReference type="EMBL" id="AY818636">
    <property type="protein sequence ID" value="AAW80703.1"/>
    <property type="molecule type" value="Genomic_DNA"/>
</dbReference>
<dbReference type="EMBL" id="AY818637">
    <property type="protein sequence ID" value="AAW80704.1"/>
    <property type="molecule type" value="Genomic_DNA"/>
</dbReference>
<dbReference type="EMBL" id="AY818638">
    <property type="protein sequence ID" value="AAW80705.1"/>
    <property type="molecule type" value="Genomic_DNA"/>
</dbReference>
<dbReference type="EMBL" id="AY818639">
    <property type="protein sequence ID" value="AAW80706.1"/>
    <property type="molecule type" value="Genomic_DNA"/>
</dbReference>
<dbReference type="EMBL" id="AY818640">
    <property type="protein sequence ID" value="AAW80707.1"/>
    <property type="molecule type" value="Genomic_DNA"/>
</dbReference>
<dbReference type="EMBL" id="EU220038">
    <property type="protein sequence ID" value="ABX25617.1"/>
    <property type="molecule type" value="Genomic_DNA"/>
</dbReference>
<dbReference type="EMBL" id="EU220039">
    <property type="protein sequence ID" value="ABX25618.1"/>
    <property type="molecule type" value="Genomic_DNA"/>
</dbReference>
<dbReference type="EMBL" id="EU220040">
    <property type="protein sequence ID" value="ABX25619.1"/>
    <property type="molecule type" value="Genomic_DNA"/>
</dbReference>
<dbReference type="EMBL" id="EU220041">
    <property type="protein sequence ID" value="ABX25620.1"/>
    <property type="molecule type" value="Genomic_DNA"/>
</dbReference>
<dbReference type="SMR" id="Q5ENZ1"/>
<dbReference type="GO" id="GO:0005615">
    <property type="term" value="C:extracellular space"/>
    <property type="evidence" value="ECO:0000250"/>
    <property type="project" value="UniProtKB"/>
</dbReference>
<dbReference type="GO" id="GO:0005550">
    <property type="term" value="F:pheromone binding"/>
    <property type="evidence" value="ECO:0007669"/>
    <property type="project" value="UniProtKB-KW"/>
</dbReference>
<dbReference type="GO" id="GO:0019236">
    <property type="term" value="P:response to pheromone"/>
    <property type="evidence" value="ECO:0007669"/>
    <property type="project" value="UniProtKB-KW"/>
</dbReference>
<dbReference type="GO" id="GO:0035176">
    <property type="term" value="P:social behavior"/>
    <property type="evidence" value="ECO:0000250"/>
    <property type="project" value="UniProtKB"/>
</dbReference>
<dbReference type="CDD" id="cd23992">
    <property type="entry name" value="PBP_GOBP"/>
    <property type="match status" value="1"/>
</dbReference>
<dbReference type="FunFam" id="1.10.238.20:FF:000004">
    <property type="entry name" value="Pheromone-binding protein Gp-9"/>
    <property type="match status" value="1"/>
</dbReference>
<dbReference type="Gene3D" id="1.10.238.20">
    <property type="entry name" value="Pheromone/general odorant binding protein domain"/>
    <property type="match status" value="1"/>
</dbReference>
<dbReference type="InterPro" id="IPR006170">
    <property type="entry name" value="PBP/GOBP"/>
</dbReference>
<dbReference type="InterPro" id="IPR036728">
    <property type="entry name" value="PBP_GOBP_sf"/>
</dbReference>
<dbReference type="InterPro" id="IPR022354">
    <property type="entry name" value="Pheromone-bd_protein_Gp-9"/>
</dbReference>
<dbReference type="Pfam" id="PF01395">
    <property type="entry name" value="PBP_GOBP"/>
    <property type="match status" value="1"/>
</dbReference>
<dbReference type="PRINTS" id="PR02007">
    <property type="entry name" value="ODORANTBPGP9"/>
</dbReference>
<dbReference type="SUPFAM" id="SSF47565">
    <property type="entry name" value="Insect pheromone/odorant-binding proteins"/>
    <property type="match status" value="1"/>
</dbReference>
<keyword id="KW-0085">Behavior</keyword>
<keyword id="KW-1015">Disulfide bond</keyword>
<keyword id="KW-0589">Pheromone response</keyword>
<keyword id="KW-0590">Pheromone-binding</keyword>
<keyword id="KW-0964">Secreted</keyword>
<keyword id="KW-0732">Signal</keyword>
<keyword id="KW-0813">Transport</keyword>
<name>PBGP9_SOLSV</name>
<comment type="function">
    <text evidence="3">Colony queen number, a major feature of social organization, is associated with worker genotype for Gp-9. Colonies are headed by either a single reproductive queen (monogyne form) or multiple queens (polygyne form). Differences in worker Gp-9 genotypes between social forms may cause differences in workers' abilities to recognize queens and regulate their numbers (By similarity).</text>
</comment>
<comment type="subunit">
    <text evidence="2">Homodimer.</text>
</comment>
<comment type="subcellular location">
    <subcellularLocation>
        <location evidence="1">Secreted</location>
    </subcellularLocation>
</comment>
<comment type="polymorphism">
    <text evidence="5">Allele B2, monogyne population from Brazil.</text>
</comment>
<comment type="similarity">
    <text evidence="4">Belongs to the PBP/GOBP family.</text>
</comment>
<accession>Q5ENZ1</accession>
<accession>A9LKE1</accession>
<accession>A9LKE2</accession>
<accession>Q5ENZ5</accession>
<accession>Q8WRQ3</accession>
<evidence type="ECO:0000250" key="1"/>
<evidence type="ECO:0000250" key="2">
    <source>
        <dbReference type="UniProtKB" id="P20797"/>
    </source>
</evidence>
<evidence type="ECO:0000250" key="3">
    <source>
        <dbReference type="UniProtKB" id="Q8WP90"/>
    </source>
</evidence>
<evidence type="ECO:0000255" key="4"/>
<evidence type="ECO:0000269" key="5">
    <source>
    </source>
</evidence>
<evidence type="ECO:0000305" key="6"/>
<evidence type="ECO:0000312" key="7">
    <source>
        <dbReference type="EMBL" id="AAL51118.1"/>
    </source>
</evidence>
<evidence type="ECO:0000312" key="8">
    <source>
        <dbReference type="EMBL" id="AAW80707.1"/>
    </source>
</evidence>
<evidence type="ECO:0000312" key="9">
    <source>
        <dbReference type="EMBL" id="ABX25617.1"/>
    </source>
</evidence>
<evidence type="ECO:0000312" key="10">
    <source>
        <dbReference type="EMBL" id="ABX25618.1"/>
    </source>
</evidence>
<evidence type="ECO:0000312" key="11">
    <source>
        <dbReference type="EMBL" id="ABX25619.1"/>
    </source>
</evidence>
<evidence type="ECO:0000312" key="12">
    <source>
        <dbReference type="EMBL" id="ABX25620.1"/>
    </source>
</evidence>
<proteinExistence type="inferred from homology"/>
<organism>
    <name type="scientific">Solenopsis saevissima</name>
    <name type="common">Fire ant</name>
    <name type="synonym">Myrmecia saevissima</name>
    <dbReference type="NCBI Taxonomy" id="176597"/>
    <lineage>
        <taxon>Eukaryota</taxon>
        <taxon>Metazoa</taxon>
        <taxon>Ecdysozoa</taxon>
        <taxon>Arthropoda</taxon>
        <taxon>Hexapoda</taxon>
        <taxon>Insecta</taxon>
        <taxon>Pterygota</taxon>
        <taxon>Neoptera</taxon>
        <taxon>Endopterygota</taxon>
        <taxon>Hymenoptera</taxon>
        <taxon>Apocrita</taxon>
        <taxon>Aculeata</taxon>
        <taxon>Formicoidea</taxon>
        <taxon>Formicidae</taxon>
        <taxon>Myrmicinae</taxon>
        <taxon>Solenopsis</taxon>
    </lineage>
</organism>
<reference evidence="7" key="1">
    <citation type="journal article" date="2002" name="Science">
        <title>Identification of a major gene regulating complex social behavior.</title>
        <authorList>
            <person name="Krieger M.J.B."/>
            <person name="Ross K.G."/>
        </authorList>
    </citation>
    <scope>NUCLEOTIDE SEQUENCE [GENOMIC DNA]</scope>
</reference>
<reference evidence="6 8" key="2">
    <citation type="journal article" date="2005" name="Mol. Biol. Evol.">
        <title>Molecular evolutionary analyses of the odorant-binding protein gene Gp-9 in fire ants and other Solenopsis species.</title>
        <authorList>
            <person name="Krieger M.J.B."/>
            <person name="Ross K.G."/>
        </authorList>
    </citation>
    <scope>NUCLEOTIDE SEQUENCE [GENOMIC DNA] (ALLELES B2; B3; B4; B5 AND B6)</scope>
</reference>
<reference evidence="9" key="3">
    <citation type="journal article" date="2007" name="PLoS ONE">
        <title>Molecular variation at a candidate gene implicated in the regulation of fire ant social behavior.</title>
        <authorList>
            <person name="Gotzek D."/>
            <person name="Shoemaker D.D."/>
            <person name="Ross K.G."/>
        </authorList>
    </citation>
    <scope>NUCLEOTIDE SEQUENCE [GENOMIC DNA]</scope>
    <source>
        <strain evidence="9">O-3m</strain>
        <strain evidence="10">W-31</strain>
        <strain evidence="11">W-42</strain>
        <strain evidence="12">W-72</strain>
    </source>
</reference>
<gene>
    <name evidence="8" type="primary">Gp-9</name>
</gene>
<feature type="signal peptide" evidence="3">
    <location>
        <begin position="1"/>
        <end position="19"/>
    </location>
</feature>
<feature type="chain" id="PRO_5000094284" description="Pheromone-binding protein Gp-9" evidence="3">
    <location>
        <begin position="20"/>
        <end position="153"/>
    </location>
</feature>
<feature type="disulfide bond" evidence="2">
    <location>
        <begin position="37"/>
        <end position="77"/>
    </location>
</feature>
<feature type="disulfide bond" evidence="2">
    <location>
        <begin position="73"/>
        <end position="129"/>
    </location>
</feature>
<feature type="disulfide bond" evidence="2">
    <location>
        <begin position="118"/>
        <end position="138"/>
    </location>
</feature>
<feature type="sequence variant" description="In allele B6." evidence="5">
    <original>E</original>
    <variation>A</variation>
    <location>
        <position position="35"/>
    </location>
</feature>
<feature type="sequence variant" description="In allele B6." evidence="5">
    <original>G</original>
    <variation>S</variation>
    <location>
        <position position="42"/>
    </location>
</feature>
<feature type="sequence variant" description="In allele B6." evidence="5">
    <original>D</original>
    <variation>E</variation>
    <location>
        <position position="45"/>
    </location>
</feature>
<feature type="sequence variant" description="In allele B6." evidence="5">
    <original>V</original>
    <variation>I</variation>
    <location>
        <position position="48"/>
    </location>
</feature>
<feature type="sequence variant" description="In allele B6." evidence="5">
    <original>D</original>
    <variation>E</variation>
    <location>
        <position position="65"/>
    </location>
</feature>
<feature type="sequence variant" description="In allele B6." evidence="5">
    <original>L</original>
    <variation>M</variation>
    <location>
        <position position="75"/>
    </location>
</feature>
<feature type="sequence variant" description="In allele B3, allele B4 and allele B5." evidence="5">
    <original>M</original>
    <variation>I</variation>
    <location>
        <position position="119"/>
    </location>
</feature>
<feature type="sequence variant" description="In allele B6." evidence="5">
    <original>T</original>
    <variation>K</variation>
    <location>
        <position position="123"/>
    </location>
</feature>